<reference key="1">
    <citation type="journal article" date="2005" name="Nature">
        <title>The map-based sequence of the rice genome.</title>
        <authorList>
            <consortium name="International rice genome sequencing project (IRGSP)"/>
        </authorList>
    </citation>
    <scope>NUCLEOTIDE SEQUENCE [LARGE SCALE GENOMIC DNA]</scope>
    <source>
        <strain>cv. Nipponbare</strain>
    </source>
</reference>
<reference key="2">
    <citation type="journal article" date="2008" name="Nucleic Acids Res.">
        <title>The rice annotation project database (RAP-DB): 2008 update.</title>
        <authorList>
            <consortium name="The rice annotation project (RAP)"/>
        </authorList>
    </citation>
    <scope>GENOME REANNOTATION</scope>
    <source>
        <strain>cv. Nipponbare</strain>
    </source>
</reference>
<reference key="3">
    <citation type="journal article" date="2013" name="Rice">
        <title>Improvement of the Oryza sativa Nipponbare reference genome using next generation sequence and optical map data.</title>
        <authorList>
            <person name="Kawahara Y."/>
            <person name="de la Bastide M."/>
            <person name="Hamilton J.P."/>
            <person name="Kanamori H."/>
            <person name="McCombie W.R."/>
            <person name="Ouyang S."/>
            <person name="Schwartz D.C."/>
            <person name="Tanaka T."/>
            <person name="Wu J."/>
            <person name="Zhou S."/>
            <person name="Childs K.L."/>
            <person name="Davidson R.M."/>
            <person name="Lin H."/>
            <person name="Quesada-Ocampo L."/>
            <person name="Vaillancourt B."/>
            <person name="Sakai H."/>
            <person name="Lee S.S."/>
            <person name="Kim J."/>
            <person name="Numa H."/>
            <person name="Itoh T."/>
            <person name="Buell C.R."/>
            <person name="Matsumoto T."/>
        </authorList>
    </citation>
    <scope>GENOME REANNOTATION</scope>
    <source>
        <strain>cv. Nipponbare</strain>
    </source>
</reference>
<reference key="4">
    <citation type="journal article" date="2008" name="Mol. Plant">
        <title>The receptor-like cytoplasmic kinase (OsRLCK) gene family in rice: organization, phylogenetic relationship, and expression during development and stress.</title>
        <authorList>
            <person name="Vij S."/>
            <person name="Giri J."/>
            <person name="Dansana P.K."/>
            <person name="Kapoor S."/>
            <person name="Tyagi A.K."/>
        </authorList>
    </citation>
    <scope>GENE FAMILY</scope>
    <scope>NOMENCLATURE</scope>
</reference>
<reference key="5">
    <citation type="journal article" date="2015" name="Nat. Biotechnol.">
        <title>Overexpression of receptor-like kinase ERECTA improves thermotolerance in rice and tomato.</title>
        <authorList>
            <person name="Shen H."/>
            <person name="Zhong X."/>
            <person name="Zhao F."/>
            <person name="Wang Y."/>
            <person name="Yan B."/>
            <person name="Li Q."/>
            <person name="Chen G."/>
            <person name="Mao B."/>
            <person name="Wang J."/>
            <person name="Li Y."/>
            <person name="Xiao G."/>
            <person name="He Y."/>
            <person name="Xiao H."/>
            <person name="Li J."/>
            <person name="He Z."/>
        </authorList>
    </citation>
    <scope>FUNCTION</scope>
    <scope>CATALYTIC ACTIVITY</scope>
    <scope>DISRUPTION PHENOTYPE</scope>
</reference>
<reference key="6">
    <citation type="journal article" date="2018" name="Front. Plant Sci.">
        <title>Phylogenetic and CRISPR/Cas9 studies in deciphering the evolutionary trajectory and phenotypic impacts of rice ERECTA genes.</title>
        <authorList>
            <person name="Zhang Y."/>
            <person name="Li S."/>
            <person name="Xue S."/>
            <person name="Yang S."/>
            <person name="Huang J."/>
            <person name="Wang L."/>
        </authorList>
    </citation>
    <scope>FUNCTION</scope>
    <scope>DISRUPTION PHENOTYPE</scope>
</reference>
<proteinExistence type="evidence at protein level"/>
<name>EREC1_ORYSJ</name>
<feature type="signal peptide" evidence="1">
    <location>
        <begin position="1"/>
        <end position="24"/>
    </location>
</feature>
<feature type="chain" id="PRO_5013532859" description="LRR receptor-like serine/threonine-protein kinase ER1">
    <location>
        <begin position="25"/>
        <end position="978"/>
    </location>
</feature>
<feature type="topological domain" description="Extracellular" evidence="8">
    <location>
        <begin position="25"/>
        <end position="577"/>
    </location>
</feature>
<feature type="transmembrane region" description="Helical" evidence="1">
    <location>
        <begin position="578"/>
        <end position="598"/>
    </location>
</feature>
<feature type="topological domain" description="Cytoplasmic" evidence="8">
    <location>
        <begin position="599"/>
        <end position="978"/>
    </location>
</feature>
<feature type="repeat" description="LRR 1" evidence="1">
    <location>
        <begin position="66"/>
        <end position="87"/>
    </location>
</feature>
<feature type="repeat" description="LRR 2" evidence="1">
    <location>
        <begin position="88"/>
        <end position="112"/>
    </location>
</feature>
<feature type="repeat" description="LRR 3" evidence="1">
    <location>
        <begin position="114"/>
        <end position="136"/>
    </location>
</feature>
<feature type="repeat" description="LRR 4" evidence="1">
    <location>
        <begin position="137"/>
        <end position="159"/>
    </location>
</feature>
<feature type="repeat" description="LRR 5" evidence="1">
    <location>
        <begin position="160"/>
        <end position="184"/>
    </location>
</feature>
<feature type="repeat" description="LRR 6" evidence="1">
    <location>
        <begin position="186"/>
        <end position="208"/>
    </location>
</feature>
<feature type="repeat" description="LRR 7" evidence="1">
    <location>
        <begin position="209"/>
        <end position="232"/>
    </location>
</feature>
<feature type="repeat" description="LRR 8" evidence="1">
    <location>
        <begin position="233"/>
        <end position="257"/>
    </location>
</feature>
<feature type="repeat" description="LRR 9" evidence="1">
    <location>
        <begin position="259"/>
        <end position="278"/>
    </location>
</feature>
<feature type="repeat" description="LRR 10" evidence="1">
    <location>
        <begin position="279"/>
        <end position="302"/>
    </location>
</feature>
<feature type="repeat" description="LRR 11" evidence="1">
    <location>
        <begin position="304"/>
        <end position="327"/>
    </location>
</feature>
<feature type="repeat" description="LRR 12" evidence="1">
    <location>
        <begin position="328"/>
        <end position="350"/>
    </location>
</feature>
<feature type="repeat" description="LRR 13" evidence="1">
    <location>
        <begin position="352"/>
        <end position="375"/>
    </location>
</feature>
<feature type="repeat" description="LRR 14" evidence="1">
    <location>
        <begin position="377"/>
        <end position="399"/>
    </location>
</feature>
<feature type="repeat" description="LRR 15" evidence="1">
    <location>
        <begin position="400"/>
        <end position="423"/>
    </location>
</feature>
<feature type="repeat" description="LRR 16" evidence="1">
    <location>
        <begin position="424"/>
        <end position="447"/>
    </location>
</feature>
<feature type="repeat" description="LRR 17" evidence="1">
    <location>
        <begin position="449"/>
        <end position="470"/>
    </location>
</feature>
<feature type="repeat" description="LRR 18" evidence="1">
    <location>
        <begin position="471"/>
        <end position="494"/>
    </location>
</feature>
<feature type="repeat" description="LRR 19" evidence="1">
    <location>
        <begin position="496"/>
        <end position="518"/>
    </location>
</feature>
<feature type="repeat" description="LRR 20" evidence="1">
    <location>
        <begin position="519"/>
        <end position="543"/>
    </location>
</feature>
<feature type="domain" description="Protein kinase" evidence="2">
    <location>
        <begin position="645"/>
        <end position="916"/>
    </location>
</feature>
<feature type="active site" description="Proton acceptor" evidence="2">
    <location>
        <position position="771"/>
    </location>
</feature>
<feature type="binding site" evidence="2">
    <location>
        <begin position="651"/>
        <end position="659"/>
    </location>
    <ligand>
        <name>ATP</name>
        <dbReference type="ChEBI" id="CHEBI:30616"/>
    </ligand>
</feature>
<feature type="binding site" evidence="2">
    <location>
        <position position="673"/>
    </location>
    <ligand>
        <name>ATP</name>
        <dbReference type="ChEBI" id="CHEBI:30616"/>
    </ligand>
</feature>
<feature type="glycosylation site" description="N-linked (GlcNAc...) asparagine" evidence="3">
    <location>
        <position position="62"/>
    </location>
</feature>
<feature type="glycosylation site" description="N-linked (GlcNAc...) asparagine" evidence="3">
    <location>
        <position position="71"/>
    </location>
</feature>
<feature type="glycosylation site" description="N-linked (GlcNAc...) asparagine" evidence="3">
    <location>
        <position position="218"/>
    </location>
</feature>
<feature type="glycosylation site" description="N-linked (GlcNAc...) asparagine" evidence="3">
    <location>
        <position position="231"/>
    </location>
</feature>
<feature type="glycosylation site" description="N-linked (GlcNAc...) asparagine" evidence="3">
    <location>
        <position position="302"/>
    </location>
</feature>
<feature type="glycosylation site" description="N-linked (GlcNAc...) asparagine" evidence="3">
    <location>
        <position position="326"/>
    </location>
</feature>
<feature type="glycosylation site" description="N-linked (GlcNAc...) asparagine" evidence="3">
    <location>
        <position position="371"/>
    </location>
</feature>
<feature type="glycosylation site" description="N-linked (GlcNAc...) asparagine" evidence="3">
    <location>
        <position position="389"/>
    </location>
</feature>
<feature type="glycosylation site" description="N-linked (GlcNAc...) asparagine" evidence="3">
    <location>
        <position position="406"/>
    </location>
</feature>
<feature type="glycosylation site" description="N-linked (GlcNAc...) asparagine" evidence="3">
    <location>
        <position position="454"/>
    </location>
</feature>
<feature type="glycosylation site" description="N-linked (GlcNAc...) asparagine" evidence="3">
    <location>
        <position position="507"/>
    </location>
</feature>
<feature type="glycosylation site" description="N-linked (GlcNAc...) asparagine" evidence="3">
    <location>
        <position position="525"/>
    </location>
</feature>
<feature type="glycosylation site" description="N-linked (GlcNAc...) asparagine" evidence="3">
    <location>
        <position position="540"/>
    </location>
</feature>
<sequence>MTPAPAAASYRALVALLLVAVAVADDGSTLLEIKKSFRNVDNVLYDWAGGDYCSWRGVLCDNVTFAVAALNLSGLNLGGEISPAVGRLKGIVSIDLKSNGLSGQIPDEIGDCSSLKTLDLSFNSLDGDIPFSVSKLKHIESLILKNNQLIGVIPSTLSQLPNLKILDLAQNKLSGEIPRLIYWNEVLQYLGLRGNNLEGSISPDICQLTGLWYFDVKNNSLTGPIPETIGNCTSFQVLDLSYNKLSGSIPFNIGFLQVATLSLQGNMFTGPIPSVIGLMQALAVLDLSYNQLSGPIPSILGNLTYTEKLYMQGNKLTGPIPPELGNMSTLHYLELNDNQLSGFIPPEFGKLTGLFDLNLANNNFEGPIPDNISSCVNLNSFNAYGNRLNGTIPPSLHKLESMTYLNLSSNFLSGSIPIELSRINNLDTLDLSCNMITGPIPSTIGSLEHLLRLNLSNNGLVGFIPAEIGNLRSIMEIDMSNNHLGGLIPQELGMLQNLMLLNLKNNNITGDVSSLMNCFSLNILNVSYNNLAGVVPTDNNFSRFSPDSFLGNPGLCGYWLGSSCRSSGHQQKPLISKAAILGIAVGGLVILLMILVAVCRPHSPPVFKDVSVSKPVSNVPPKLVILHMNLSLLVYEDIMTMTENLSEKYIIGYGASSTVYKCVSKNRKPVAVKKLYAHYPQSFKEFETELETVGSIKHRNLVSLQGYSLSPVGNLLFYDYMENGSLWDVLHEGPTKKKKLDWETRLRIALGAAQGLAYLHHDCSPRIIHRDVKSKNILLDKDYEAHLTDFGIAKSLCVSKTHTSTYVMGTIGYIDPEYARTSRLNEKSDVYSYGIVLLELLTGKKPVDNECNLHHLILSKTANNAVMETVDPDIADTCKDLGEVKKVFQLALLCTKRQPSDRPTMHEVVRVLDCLVRPDPPPKSAQQLAMPQRPAVPSYINEYVSLRGTSVLSCANSSCTSDAELFLKFGEVISQNTE</sequence>
<accession>Q69SP5</accession>
<gene>
    <name evidence="7" type="primary">ER1</name>
    <name evidence="6" type="synonym">RLCK204</name>
    <name evidence="11" type="ordered locus">Os06g0203800</name>
    <name evidence="8" type="ordered locus">LOC_Os06g10230</name>
    <name evidence="10" type="ORF">OSJNBa0016O19.39</name>
</gene>
<organism>
    <name type="scientific">Oryza sativa subsp. japonica</name>
    <name type="common">Rice</name>
    <dbReference type="NCBI Taxonomy" id="39947"/>
    <lineage>
        <taxon>Eukaryota</taxon>
        <taxon>Viridiplantae</taxon>
        <taxon>Streptophyta</taxon>
        <taxon>Embryophyta</taxon>
        <taxon>Tracheophyta</taxon>
        <taxon>Spermatophyta</taxon>
        <taxon>Magnoliopsida</taxon>
        <taxon>Liliopsida</taxon>
        <taxon>Poales</taxon>
        <taxon>Poaceae</taxon>
        <taxon>BOP clade</taxon>
        <taxon>Oryzoideae</taxon>
        <taxon>Oryzeae</taxon>
        <taxon>Oryzinae</taxon>
        <taxon>Oryza</taxon>
        <taxon>Oryza sativa</taxon>
    </lineage>
</organism>
<evidence type="ECO:0000255" key="1"/>
<evidence type="ECO:0000255" key="2">
    <source>
        <dbReference type="PROSITE-ProRule" id="PRU00159"/>
    </source>
</evidence>
<evidence type="ECO:0000255" key="3">
    <source>
        <dbReference type="PROSITE-ProRule" id="PRU00498"/>
    </source>
</evidence>
<evidence type="ECO:0000269" key="4">
    <source>
    </source>
</evidence>
<evidence type="ECO:0000269" key="5">
    <source>
    </source>
</evidence>
<evidence type="ECO:0000303" key="6">
    <source>
    </source>
</evidence>
<evidence type="ECO:0000303" key="7">
    <source>
    </source>
</evidence>
<evidence type="ECO:0000305" key="8"/>
<evidence type="ECO:0000305" key="9">
    <source>
    </source>
</evidence>
<evidence type="ECO:0000312" key="10">
    <source>
        <dbReference type="EMBL" id="BAD35990.1"/>
    </source>
</evidence>
<evidence type="ECO:0000312" key="11">
    <source>
        <dbReference type="EMBL" id="BAF19001.1"/>
    </source>
</evidence>
<keyword id="KW-0067">ATP-binding</keyword>
<keyword id="KW-1003">Cell membrane</keyword>
<keyword id="KW-0325">Glycoprotein</keyword>
<keyword id="KW-0341">Growth regulation</keyword>
<keyword id="KW-0418">Kinase</keyword>
<keyword id="KW-0433">Leucine-rich repeat</keyword>
<keyword id="KW-0472">Membrane</keyword>
<keyword id="KW-0547">Nucleotide-binding</keyword>
<keyword id="KW-0675">Receptor</keyword>
<keyword id="KW-1185">Reference proteome</keyword>
<keyword id="KW-0677">Repeat</keyword>
<keyword id="KW-0723">Serine/threonine-protein kinase</keyword>
<keyword id="KW-0732">Signal</keyword>
<keyword id="KW-0346">Stress response</keyword>
<keyword id="KW-0808">Transferase</keyword>
<keyword id="KW-0812">Transmembrane</keyword>
<keyword id="KW-1133">Transmembrane helix</keyword>
<protein>
    <recommendedName>
        <fullName evidence="8">LRR receptor-like serine/threonine-protein kinase ER1</fullName>
        <ecNumber evidence="9">2.7.11.1</ecNumber>
    </recommendedName>
    <alternativeName>
        <fullName evidence="7">ERECTA homolog 1</fullName>
        <shortName evidence="7">ER homolog 1</shortName>
        <shortName evidence="7">OsER1</shortName>
    </alternativeName>
    <alternativeName>
        <fullName evidence="6">Receptor-like cytoplasmic kinase 204</fullName>
        <shortName evidence="6">OsRLCK204</shortName>
    </alternativeName>
</protein>
<dbReference type="EC" id="2.7.11.1" evidence="9"/>
<dbReference type="EMBL" id="AP004991">
    <property type="protein sequence ID" value="BAD35990.1"/>
    <property type="molecule type" value="Genomic_DNA"/>
</dbReference>
<dbReference type="EMBL" id="AP008212">
    <property type="protein sequence ID" value="BAF19001.1"/>
    <property type="molecule type" value="Genomic_DNA"/>
</dbReference>
<dbReference type="EMBL" id="AP014962">
    <property type="protein sequence ID" value="BAS96679.1"/>
    <property type="molecule type" value="Genomic_DNA"/>
</dbReference>
<dbReference type="SMR" id="Q69SP5"/>
<dbReference type="FunCoup" id="Q69SP5">
    <property type="interactions" value="1691"/>
</dbReference>
<dbReference type="STRING" id="39947.Q69SP5"/>
<dbReference type="GlyCosmos" id="Q69SP5">
    <property type="glycosylation" value="13 sites, No reported glycans"/>
</dbReference>
<dbReference type="PaxDb" id="39947-Q69SP5"/>
<dbReference type="EnsemblPlants" id="Os06t0203800-01">
    <property type="protein sequence ID" value="Os06t0203800-01"/>
    <property type="gene ID" value="Os06g0203800"/>
</dbReference>
<dbReference type="Gramene" id="Os06t0203800-01">
    <property type="protein sequence ID" value="Os06t0203800-01"/>
    <property type="gene ID" value="Os06g0203800"/>
</dbReference>
<dbReference type="KEGG" id="dosa:Os06g0203800"/>
<dbReference type="KEGG" id="osa:4340427"/>
<dbReference type="eggNOG" id="ENOG502QTEP">
    <property type="taxonomic scope" value="Eukaryota"/>
</dbReference>
<dbReference type="HOGENOM" id="CLU_000288_22_1_1"/>
<dbReference type="InParanoid" id="Q69SP5"/>
<dbReference type="OMA" id="VYEDIMT"/>
<dbReference type="OrthoDB" id="676979at2759"/>
<dbReference type="Proteomes" id="UP000000763">
    <property type="component" value="Chromosome 6"/>
</dbReference>
<dbReference type="Proteomes" id="UP000059680">
    <property type="component" value="Chromosome 6"/>
</dbReference>
<dbReference type="GO" id="GO:0016020">
    <property type="term" value="C:membrane"/>
    <property type="evidence" value="ECO:0000318"/>
    <property type="project" value="GO_Central"/>
</dbReference>
<dbReference type="GO" id="GO:0005886">
    <property type="term" value="C:plasma membrane"/>
    <property type="evidence" value="ECO:0007669"/>
    <property type="project" value="UniProtKB-SubCell"/>
</dbReference>
<dbReference type="GO" id="GO:0005524">
    <property type="term" value="F:ATP binding"/>
    <property type="evidence" value="ECO:0007669"/>
    <property type="project" value="UniProtKB-KW"/>
</dbReference>
<dbReference type="GO" id="GO:0106310">
    <property type="term" value="F:protein serine kinase activity"/>
    <property type="evidence" value="ECO:0007669"/>
    <property type="project" value="RHEA"/>
</dbReference>
<dbReference type="GO" id="GO:0004674">
    <property type="term" value="F:protein serine/threonine kinase activity"/>
    <property type="evidence" value="ECO:0007669"/>
    <property type="project" value="UniProtKB-KW"/>
</dbReference>
<dbReference type="GO" id="GO:0033612">
    <property type="term" value="F:receptor serine/threonine kinase binding"/>
    <property type="evidence" value="ECO:0000318"/>
    <property type="project" value="GO_Central"/>
</dbReference>
<dbReference type="GO" id="GO:0010286">
    <property type="term" value="P:heat acclimation"/>
    <property type="evidence" value="ECO:0000315"/>
    <property type="project" value="UniProtKB"/>
</dbReference>
<dbReference type="GO" id="GO:0001558">
    <property type="term" value="P:regulation of cell growth"/>
    <property type="evidence" value="ECO:0000315"/>
    <property type="project" value="UniProtKB"/>
</dbReference>
<dbReference type="FunFam" id="1.10.510.10:FF:000290">
    <property type="entry name" value="LRR receptor-like serine/threonine-protein kinase ERECTA"/>
    <property type="match status" value="1"/>
</dbReference>
<dbReference type="FunFam" id="3.30.200.20:FF:000288">
    <property type="entry name" value="LRR receptor-like serine/threonine-protein kinase ERECTA"/>
    <property type="match status" value="1"/>
</dbReference>
<dbReference type="FunFam" id="3.80.10.10:FF:000077">
    <property type="entry name" value="LRR receptor-like serine/threonine-protein kinase ERL1"/>
    <property type="match status" value="1"/>
</dbReference>
<dbReference type="FunFam" id="3.80.10.10:FF:000107">
    <property type="entry name" value="LRR receptor-like serine/threonine-protein kinase ERL1"/>
    <property type="match status" value="1"/>
</dbReference>
<dbReference type="FunFam" id="3.80.10.10:FF:000219">
    <property type="entry name" value="LRR receptor-like serine/threonine-protein kinase ERL1"/>
    <property type="match status" value="1"/>
</dbReference>
<dbReference type="Gene3D" id="3.30.200.20">
    <property type="entry name" value="Phosphorylase Kinase, domain 1"/>
    <property type="match status" value="1"/>
</dbReference>
<dbReference type="Gene3D" id="3.80.10.10">
    <property type="entry name" value="Ribonuclease Inhibitor"/>
    <property type="match status" value="5"/>
</dbReference>
<dbReference type="Gene3D" id="1.10.510.10">
    <property type="entry name" value="Transferase(Phosphotransferase) domain 1"/>
    <property type="match status" value="1"/>
</dbReference>
<dbReference type="InterPro" id="IPR011009">
    <property type="entry name" value="Kinase-like_dom_sf"/>
</dbReference>
<dbReference type="InterPro" id="IPR001611">
    <property type="entry name" value="Leu-rich_rpt"/>
</dbReference>
<dbReference type="InterPro" id="IPR003591">
    <property type="entry name" value="Leu-rich_rpt_typical-subtyp"/>
</dbReference>
<dbReference type="InterPro" id="IPR032675">
    <property type="entry name" value="LRR_dom_sf"/>
</dbReference>
<dbReference type="InterPro" id="IPR013210">
    <property type="entry name" value="LRR_N_plant-typ"/>
</dbReference>
<dbReference type="InterPro" id="IPR050647">
    <property type="entry name" value="Plant_LRR-RLKs"/>
</dbReference>
<dbReference type="InterPro" id="IPR000719">
    <property type="entry name" value="Prot_kinase_dom"/>
</dbReference>
<dbReference type="InterPro" id="IPR017441">
    <property type="entry name" value="Protein_kinase_ATP_BS"/>
</dbReference>
<dbReference type="InterPro" id="IPR008271">
    <property type="entry name" value="Ser/Thr_kinase_AS"/>
</dbReference>
<dbReference type="PANTHER" id="PTHR48056">
    <property type="entry name" value="LRR RECEPTOR-LIKE SERINE/THREONINE-PROTEIN KINASE-RELATED"/>
    <property type="match status" value="1"/>
</dbReference>
<dbReference type="PANTHER" id="PTHR48056:SF6">
    <property type="entry name" value="LRR RECEPTOR-LIKE SERINE_THREONINE-PROTEIN KINASE ERECTA"/>
    <property type="match status" value="1"/>
</dbReference>
<dbReference type="Pfam" id="PF00560">
    <property type="entry name" value="LRR_1"/>
    <property type="match status" value="8"/>
</dbReference>
<dbReference type="Pfam" id="PF13855">
    <property type="entry name" value="LRR_8"/>
    <property type="match status" value="2"/>
</dbReference>
<dbReference type="Pfam" id="PF08263">
    <property type="entry name" value="LRRNT_2"/>
    <property type="match status" value="1"/>
</dbReference>
<dbReference type="Pfam" id="PF00069">
    <property type="entry name" value="Pkinase"/>
    <property type="match status" value="1"/>
</dbReference>
<dbReference type="SMART" id="SM00369">
    <property type="entry name" value="LRR_TYP"/>
    <property type="match status" value="7"/>
</dbReference>
<dbReference type="SMART" id="SM00220">
    <property type="entry name" value="S_TKc"/>
    <property type="match status" value="1"/>
</dbReference>
<dbReference type="SUPFAM" id="SSF52058">
    <property type="entry name" value="L domain-like"/>
    <property type="match status" value="2"/>
</dbReference>
<dbReference type="SUPFAM" id="SSF56112">
    <property type="entry name" value="Protein kinase-like (PK-like)"/>
    <property type="match status" value="1"/>
</dbReference>
<dbReference type="PROSITE" id="PS51450">
    <property type="entry name" value="LRR"/>
    <property type="match status" value="13"/>
</dbReference>
<dbReference type="PROSITE" id="PS00107">
    <property type="entry name" value="PROTEIN_KINASE_ATP"/>
    <property type="match status" value="1"/>
</dbReference>
<dbReference type="PROSITE" id="PS50011">
    <property type="entry name" value="PROTEIN_KINASE_DOM"/>
    <property type="match status" value="1"/>
</dbReference>
<dbReference type="PROSITE" id="PS00108">
    <property type="entry name" value="PROTEIN_KINASE_ST"/>
    <property type="match status" value="1"/>
</dbReference>
<comment type="function">
    <text evidence="4 5">Receptor kinase involved in the regulation of thermotolerance (PubMed:26280413). Functions as a positive regulator of heat tolerance (PubMed:26280413). May be involved in the regulation of cell proliferation and cell growth (PubMed:29692796).</text>
</comment>
<comment type="catalytic activity">
    <reaction evidence="9">
        <text>L-seryl-[protein] + ATP = O-phospho-L-seryl-[protein] + ADP + H(+)</text>
        <dbReference type="Rhea" id="RHEA:17989"/>
        <dbReference type="Rhea" id="RHEA-COMP:9863"/>
        <dbReference type="Rhea" id="RHEA-COMP:11604"/>
        <dbReference type="ChEBI" id="CHEBI:15378"/>
        <dbReference type="ChEBI" id="CHEBI:29999"/>
        <dbReference type="ChEBI" id="CHEBI:30616"/>
        <dbReference type="ChEBI" id="CHEBI:83421"/>
        <dbReference type="ChEBI" id="CHEBI:456216"/>
        <dbReference type="EC" id="2.7.11.1"/>
    </reaction>
    <physiologicalReaction direction="left-to-right" evidence="9">
        <dbReference type="Rhea" id="RHEA:17990"/>
    </physiologicalReaction>
</comment>
<comment type="catalytic activity">
    <reaction evidence="9">
        <text>L-threonyl-[protein] + ATP = O-phospho-L-threonyl-[protein] + ADP + H(+)</text>
        <dbReference type="Rhea" id="RHEA:46608"/>
        <dbReference type="Rhea" id="RHEA-COMP:11060"/>
        <dbReference type="Rhea" id="RHEA-COMP:11605"/>
        <dbReference type="ChEBI" id="CHEBI:15378"/>
        <dbReference type="ChEBI" id="CHEBI:30013"/>
        <dbReference type="ChEBI" id="CHEBI:30616"/>
        <dbReference type="ChEBI" id="CHEBI:61977"/>
        <dbReference type="ChEBI" id="CHEBI:456216"/>
        <dbReference type="EC" id="2.7.11.1"/>
    </reaction>
    <physiologicalReaction direction="left-to-right" evidence="9">
        <dbReference type="Rhea" id="RHEA:46609"/>
    </physiologicalReaction>
</comment>
<comment type="subcellular location">
    <subcellularLocation>
        <location evidence="1">Cell membrane</location>
        <topology evidence="1">Single-pass type I membrane protein</topology>
    </subcellularLocation>
</comment>
<comment type="disruption phenotype">
    <text evidence="4 5">No visible phenotype under normal growth conditions, but mutant plants cannot survive when grown under heat conditions (42 degrees Celsius during the day and 35 degrees Celsius during the night) (PubMed:26280413). Reduced plant height and reduced panicle length (PubMed:29692796).</text>
</comment>
<comment type="similarity">
    <text evidence="8">Belongs to the protein kinase superfamily. Ser/Thr protein kinase family.</text>
</comment>